<name>HEM6_CAUVC</name>
<feature type="chain" id="PRO_0000109891" description="Oxygen-dependent coproporphyrinogen-III oxidase">
    <location>
        <begin position="1"/>
        <end position="290"/>
    </location>
</feature>
<feature type="region of interest" description="Important for dimerization" evidence="1">
    <location>
        <begin position="255"/>
        <end position="290"/>
    </location>
</feature>
<feature type="active site" description="Proton donor" evidence="1">
    <location>
        <position position="122"/>
    </location>
</feature>
<feature type="binding site" evidence="1">
    <location>
        <position position="108"/>
    </location>
    <ligand>
        <name>substrate</name>
    </ligand>
</feature>
<feature type="binding site" evidence="1">
    <location>
        <position position="112"/>
    </location>
    <ligand>
        <name>a divalent metal cation</name>
        <dbReference type="ChEBI" id="CHEBI:60240"/>
    </ligand>
</feature>
<feature type="binding site" evidence="1">
    <location>
        <position position="122"/>
    </location>
    <ligand>
        <name>a divalent metal cation</name>
        <dbReference type="ChEBI" id="CHEBI:60240"/>
    </ligand>
</feature>
<feature type="binding site" evidence="1">
    <location>
        <begin position="124"/>
        <end position="126"/>
    </location>
    <ligand>
        <name>substrate</name>
    </ligand>
</feature>
<feature type="binding site" evidence="1">
    <location>
        <position position="160"/>
    </location>
    <ligand>
        <name>a divalent metal cation</name>
        <dbReference type="ChEBI" id="CHEBI:60240"/>
    </ligand>
</feature>
<feature type="binding site" evidence="1">
    <location>
        <position position="190"/>
    </location>
    <ligand>
        <name>a divalent metal cation</name>
        <dbReference type="ChEBI" id="CHEBI:60240"/>
    </ligand>
</feature>
<feature type="binding site" evidence="1">
    <location>
        <begin position="273"/>
        <end position="275"/>
    </location>
    <ligand>
        <name>substrate</name>
    </ligand>
</feature>
<feature type="site" description="Important for dimerization" evidence="1">
    <location>
        <position position="190"/>
    </location>
</feature>
<accession>Q9AAT8</accession>
<reference key="1">
    <citation type="journal article" date="2001" name="Proc. Natl. Acad. Sci. U.S.A.">
        <title>Complete genome sequence of Caulobacter crescentus.</title>
        <authorList>
            <person name="Nierman W.C."/>
            <person name="Feldblyum T.V."/>
            <person name="Laub M.T."/>
            <person name="Paulsen I.T."/>
            <person name="Nelson K.E."/>
            <person name="Eisen J.A."/>
            <person name="Heidelberg J.F."/>
            <person name="Alley M.R.K."/>
            <person name="Ohta N."/>
            <person name="Maddock J.R."/>
            <person name="Potocka I."/>
            <person name="Nelson W.C."/>
            <person name="Newton A."/>
            <person name="Stephens C."/>
            <person name="Phadke N.D."/>
            <person name="Ely B."/>
            <person name="DeBoy R.T."/>
            <person name="Dodson R.J."/>
            <person name="Durkin A.S."/>
            <person name="Gwinn M.L."/>
            <person name="Haft D.H."/>
            <person name="Kolonay J.F."/>
            <person name="Smit J."/>
            <person name="Craven M.B."/>
            <person name="Khouri H.M."/>
            <person name="Shetty J."/>
            <person name="Berry K.J."/>
            <person name="Utterback T.R."/>
            <person name="Tran K."/>
            <person name="Wolf A.M."/>
            <person name="Vamathevan J.J."/>
            <person name="Ermolaeva M.D."/>
            <person name="White O."/>
            <person name="Salzberg S.L."/>
            <person name="Venter J.C."/>
            <person name="Shapiro L."/>
            <person name="Fraser C.M."/>
        </authorList>
    </citation>
    <scope>NUCLEOTIDE SEQUENCE [LARGE SCALE GENOMIC DNA]</scope>
    <source>
        <strain>ATCC 19089 / CIP 103742 / CB 15</strain>
    </source>
</reference>
<comment type="function">
    <text evidence="1">Involved in the heme biosynthesis. Catalyzes the aerobic oxidative decarboxylation of propionate groups of rings A and B of coproporphyrinogen-III to yield the vinyl groups in protoporphyrinogen-IX.</text>
</comment>
<comment type="catalytic activity">
    <reaction evidence="1">
        <text>coproporphyrinogen III + O2 + 2 H(+) = protoporphyrinogen IX + 2 CO2 + 2 H2O</text>
        <dbReference type="Rhea" id="RHEA:18257"/>
        <dbReference type="ChEBI" id="CHEBI:15377"/>
        <dbReference type="ChEBI" id="CHEBI:15378"/>
        <dbReference type="ChEBI" id="CHEBI:15379"/>
        <dbReference type="ChEBI" id="CHEBI:16526"/>
        <dbReference type="ChEBI" id="CHEBI:57307"/>
        <dbReference type="ChEBI" id="CHEBI:57309"/>
        <dbReference type="EC" id="1.3.3.3"/>
    </reaction>
</comment>
<comment type="cofactor">
    <cofactor evidence="1">
        <name>a divalent metal cation</name>
        <dbReference type="ChEBI" id="CHEBI:60240"/>
    </cofactor>
</comment>
<comment type="pathway">
    <text evidence="1">Porphyrin-containing compound metabolism; protoporphyrin-IX biosynthesis; protoporphyrinogen-IX from coproporphyrinogen-III (O2 route): step 1/1.</text>
</comment>
<comment type="subunit">
    <text evidence="1">Homodimer.</text>
</comment>
<comment type="subcellular location">
    <subcellularLocation>
        <location evidence="1">Cytoplasm</location>
    </subcellularLocation>
</comment>
<comment type="similarity">
    <text evidence="1">Belongs to the aerobic coproporphyrinogen-III oxidase family.</text>
</comment>
<organism>
    <name type="scientific">Caulobacter vibrioides (strain ATCC 19089 / CIP 103742 / CB 15)</name>
    <name type="common">Caulobacter crescentus</name>
    <dbReference type="NCBI Taxonomy" id="190650"/>
    <lineage>
        <taxon>Bacteria</taxon>
        <taxon>Pseudomonadati</taxon>
        <taxon>Pseudomonadota</taxon>
        <taxon>Alphaproteobacteria</taxon>
        <taxon>Caulobacterales</taxon>
        <taxon>Caulobacteraceae</taxon>
        <taxon>Caulobacter</taxon>
    </lineage>
</organism>
<evidence type="ECO:0000255" key="1">
    <source>
        <dbReference type="HAMAP-Rule" id="MF_00333"/>
    </source>
</evidence>
<gene>
    <name evidence="1" type="primary">hemF</name>
    <name type="ordered locus">CC_0506</name>
</gene>
<proteinExistence type="inferred from homology"/>
<keyword id="KW-0963">Cytoplasm</keyword>
<keyword id="KW-0350">Heme biosynthesis</keyword>
<keyword id="KW-0479">Metal-binding</keyword>
<keyword id="KW-0560">Oxidoreductase</keyword>
<keyword id="KW-0627">Porphyrin biosynthesis</keyword>
<keyword id="KW-1185">Reference proteome</keyword>
<protein>
    <recommendedName>
        <fullName evidence="1">Oxygen-dependent coproporphyrinogen-III oxidase</fullName>
        <shortName evidence="1">CPO</shortName>
        <shortName evidence="1">Coprogen oxidase</shortName>
        <shortName evidence="1">Coproporphyrinogenase</shortName>
        <ecNumber evidence="1">1.3.3.3</ecNumber>
    </recommendedName>
</protein>
<sequence length="290" mass="32788">MSTDQDLDTKKAAARAWFESLRDQICAAFEQLEDEAPADLYPGAPGRFAKKAWDRPAGGGGVMGMMHGRLFEKVGVHVSTVFGTFTPEMAKTMPGAAEDPRFFATGISLIAHMTNPRVPAVHMNTRFIATTKSWFGGGGDLTPLLGYQRQQDFPDAIDFHAAYKRACDKYDPEWHPKYKAWCDEYFFLPHRNEPRGIGGIFYDHHDSGDWARDFAFTQDVGRAFLEIYPTLVRRRMGEAWTADEREQQLIQRGRYVEFNLLYDRGTMFGLKTGGNVESILSSMPPAVKWP</sequence>
<dbReference type="EC" id="1.3.3.3" evidence="1"/>
<dbReference type="EMBL" id="AE005673">
    <property type="protein sequence ID" value="AAK22493.1"/>
    <property type="molecule type" value="Genomic_DNA"/>
</dbReference>
<dbReference type="PIR" id="A87312">
    <property type="entry name" value="A87312"/>
</dbReference>
<dbReference type="RefSeq" id="NP_419325.1">
    <property type="nucleotide sequence ID" value="NC_002696.2"/>
</dbReference>
<dbReference type="RefSeq" id="WP_010918394.1">
    <property type="nucleotide sequence ID" value="NC_002696.2"/>
</dbReference>
<dbReference type="SMR" id="Q9AAT8"/>
<dbReference type="STRING" id="190650.CC_0506"/>
<dbReference type="EnsemblBacteria" id="AAK22493">
    <property type="protein sequence ID" value="AAK22493"/>
    <property type="gene ID" value="CC_0506"/>
</dbReference>
<dbReference type="KEGG" id="ccr:CC_0506"/>
<dbReference type="PATRIC" id="fig|190650.5.peg.516"/>
<dbReference type="eggNOG" id="COG0408">
    <property type="taxonomic scope" value="Bacteria"/>
</dbReference>
<dbReference type="HOGENOM" id="CLU_026169_0_1_5"/>
<dbReference type="BioCyc" id="CAULO:CC0506-MONOMER"/>
<dbReference type="UniPathway" id="UPA00251">
    <property type="reaction ID" value="UER00322"/>
</dbReference>
<dbReference type="Proteomes" id="UP000001816">
    <property type="component" value="Chromosome"/>
</dbReference>
<dbReference type="GO" id="GO:0005737">
    <property type="term" value="C:cytoplasm"/>
    <property type="evidence" value="ECO:0007669"/>
    <property type="project" value="UniProtKB-SubCell"/>
</dbReference>
<dbReference type="GO" id="GO:0004109">
    <property type="term" value="F:coproporphyrinogen oxidase activity"/>
    <property type="evidence" value="ECO:0007669"/>
    <property type="project" value="UniProtKB-UniRule"/>
</dbReference>
<dbReference type="GO" id="GO:0046872">
    <property type="term" value="F:metal ion binding"/>
    <property type="evidence" value="ECO:0007669"/>
    <property type="project" value="UniProtKB-KW"/>
</dbReference>
<dbReference type="GO" id="GO:0042803">
    <property type="term" value="F:protein homodimerization activity"/>
    <property type="evidence" value="ECO:0000250"/>
    <property type="project" value="UniProtKB"/>
</dbReference>
<dbReference type="GO" id="GO:0006782">
    <property type="term" value="P:protoporphyrinogen IX biosynthetic process"/>
    <property type="evidence" value="ECO:0007669"/>
    <property type="project" value="UniProtKB-UniRule"/>
</dbReference>
<dbReference type="FunFam" id="3.40.1500.10:FF:000005">
    <property type="entry name" value="Oxygen-dependent coproporphyrinogen-III oxidase"/>
    <property type="match status" value="1"/>
</dbReference>
<dbReference type="Gene3D" id="3.40.1500.10">
    <property type="entry name" value="Coproporphyrinogen III oxidase, aerobic"/>
    <property type="match status" value="1"/>
</dbReference>
<dbReference type="HAMAP" id="MF_00333">
    <property type="entry name" value="Coprogen_oxidas"/>
    <property type="match status" value="1"/>
</dbReference>
<dbReference type="InterPro" id="IPR001260">
    <property type="entry name" value="Coprogen_oxidase_aer"/>
</dbReference>
<dbReference type="InterPro" id="IPR036406">
    <property type="entry name" value="Coprogen_oxidase_aer_sf"/>
</dbReference>
<dbReference type="InterPro" id="IPR018375">
    <property type="entry name" value="Coprogen_oxidase_CS"/>
</dbReference>
<dbReference type="NCBIfam" id="NF003727">
    <property type="entry name" value="PRK05330.1"/>
    <property type="match status" value="1"/>
</dbReference>
<dbReference type="PANTHER" id="PTHR10755">
    <property type="entry name" value="COPROPORPHYRINOGEN III OXIDASE, MITOCHONDRIAL"/>
    <property type="match status" value="1"/>
</dbReference>
<dbReference type="PANTHER" id="PTHR10755:SF0">
    <property type="entry name" value="OXYGEN-DEPENDENT COPROPORPHYRINOGEN-III OXIDASE, MITOCHONDRIAL"/>
    <property type="match status" value="1"/>
</dbReference>
<dbReference type="Pfam" id="PF01218">
    <property type="entry name" value="Coprogen_oxidas"/>
    <property type="match status" value="1"/>
</dbReference>
<dbReference type="PIRSF" id="PIRSF000166">
    <property type="entry name" value="Coproporphyri_ox"/>
    <property type="match status" value="1"/>
</dbReference>
<dbReference type="PRINTS" id="PR00073">
    <property type="entry name" value="COPRGNOXDASE"/>
</dbReference>
<dbReference type="SUPFAM" id="SSF102886">
    <property type="entry name" value="Coproporphyrinogen III oxidase"/>
    <property type="match status" value="1"/>
</dbReference>
<dbReference type="PROSITE" id="PS01021">
    <property type="entry name" value="COPROGEN_OXIDASE"/>
    <property type="match status" value="1"/>
</dbReference>